<reference key="1">
    <citation type="journal article" date="2007" name="Nat. Biotechnol.">
        <title>Genome sequencing and analysis of the versatile cell factory Aspergillus niger CBS 513.88.</title>
        <authorList>
            <person name="Pel H.J."/>
            <person name="de Winde J.H."/>
            <person name="Archer D.B."/>
            <person name="Dyer P.S."/>
            <person name="Hofmann G."/>
            <person name="Schaap P.J."/>
            <person name="Turner G."/>
            <person name="de Vries R.P."/>
            <person name="Albang R."/>
            <person name="Albermann K."/>
            <person name="Andersen M.R."/>
            <person name="Bendtsen J.D."/>
            <person name="Benen J.A.E."/>
            <person name="van den Berg M."/>
            <person name="Breestraat S."/>
            <person name="Caddick M.X."/>
            <person name="Contreras R."/>
            <person name="Cornell M."/>
            <person name="Coutinho P.M."/>
            <person name="Danchin E.G.J."/>
            <person name="Debets A.J.M."/>
            <person name="Dekker P."/>
            <person name="van Dijck P.W.M."/>
            <person name="van Dijk A."/>
            <person name="Dijkhuizen L."/>
            <person name="Driessen A.J.M."/>
            <person name="d'Enfert C."/>
            <person name="Geysens S."/>
            <person name="Goosen C."/>
            <person name="Groot G.S.P."/>
            <person name="de Groot P.W.J."/>
            <person name="Guillemette T."/>
            <person name="Henrissat B."/>
            <person name="Herweijer M."/>
            <person name="van den Hombergh J.P.T.W."/>
            <person name="van den Hondel C.A.M.J.J."/>
            <person name="van der Heijden R.T.J.M."/>
            <person name="van der Kaaij R.M."/>
            <person name="Klis F.M."/>
            <person name="Kools H.J."/>
            <person name="Kubicek C.P."/>
            <person name="van Kuyk P.A."/>
            <person name="Lauber J."/>
            <person name="Lu X."/>
            <person name="van der Maarel M.J.E.C."/>
            <person name="Meulenberg R."/>
            <person name="Menke H."/>
            <person name="Mortimer M.A."/>
            <person name="Nielsen J."/>
            <person name="Oliver S.G."/>
            <person name="Olsthoorn M."/>
            <person name="Pal K."/>
            <person name="van Peij N.N.M.E."/>
            <person name="Ram A.F.J."/>
            <person name="Rinas U."/>
            <person name="Roubos J.A."/>
            <person name="Sagt C.M.J."/>
            <person name="Schmoll M."/>
            <person name="Sun J."/>
            <person name="Ussery D."/>
            <person name="Varga J."/>
            <person name="Vervecken W."/>
            <person name="van de Vondervoort P.J.J."/>
            <person name="Wedler H."/>
            <person name="Woesten H.A.B."/>
            <person name="Zeng A.-P."/>
            <person name="van Ooyen A.J.J."/>
            <person name="Visser J."/>
            <person name="Stam H."/>
        </authorList>
    </citation>
    <scope>NUCLEOTIDE SEQUENCE [LARGE SCALE GENOMIC DNA]</scope>
    <source>
        <strain>ATCC MYA-4892 / CBS 513.88 / FGSC A1513</strain>
    </source>
</reference>
<reference key="2">
    <citation type="journal article" date="2024" name="Fungal Biol. Biotechnol.">
        <title>Breaking down barriers: comprehensive functional analysis of the Aspergillus niger chitin synthase repertoire.</title>
        <authorList>
            <person name="Barthel L."/>
            <person name="Cairns T."/>
            <person name="Duda S."/>
            <person name="Mueller H."/>
            <person name="Dobbert B."/>
            <person name="Jung S."/>
            <person name="Briesen H."/>
            <person name="Meyer V."/>
        </authorList>
    </citation>
    <scope>FUNCTION</scope>
    <scope>DISRUPTION PHENOTYPE</scope>
</reference>
<name>CHSF_ASPNC</name>
<organism>
    <name type="scientific">Aspergillus niger (strain ATCC MYA-4892 / CBS 513.88 / FGSC A1513)</name>
    <dbReference type="NCBI Taxonomy" id="425011"/>
    <lineage>
        <taxon>Eukaryota</taxon>
        <taxon>Fungi</taxon>
        <taxon>Dikarya</taxon>
        <taxon>Ascomycota</taxon>
        <taxon>Pezizomycotina</taxon>
        <taxon>Eurotiomycetes</taxon>
        <taxon>Eurotiomycetidae</taxon>
        <taxon>Eurotiales</taxon>
        <taxon>Aspergillaceae</taxon>
        <taxon>Aspergillus</taxon>
        <taxon>Aspergillus subgen. Circumdati</taxon>
    </lineage>
</organism>
<evidence type="ECO:0000255" key="1"/>
<evidence type="ECO:0000255" key="2">
    <source>
        <dbReference type="PROSITE-ProRule" id="PRU00498"/>
    </source>
</evidence>
<evidence type="ECO:0000256" key="3">
    <source>
        <dbReference type="SAM" id="MobiDB-lite"/>
    </source>
</evidence>
<evidence type="ECO:0000269" key="4">
    <source>
    </source>
</evidence>
<evidence type="ECO:0000303" key="5">
    <source>
    </source>
</evidence>
<evidence type="ECO:0000305" key="6"/>
<evidence type="ECO:0000305" key="7">
    <source>
    </source>
</evidence>
<dbReference type="EC" id="2.4.1.16" evidence="7"/>
<dbReference type="EMBL" id="AM270061">
    <property type="protein sequence ID" value="CAK38392.1"/>
    <property type="molecule type" value="Genomic_DNA"/>
</dbReference>
<dbReference type="RefSeq" id="XP_001390511.2">
    <property type="nucleotide sequence ID" value="XM_001390474.2"/>
</dbReference>
<dbReference type="SMR" id="A2QHC2"/>
<dbReference type="CAZy" id="GT2">
    <property type="family name" value="Glycosyltransferase Family 2"/>
</dbReference>
<dbReference type="EnsemblFungi" id="CAK38392">
    <property type="protein sequence ID" value="CAK38392"/>
    <property type="gene ID" value="An03g06360"/>
</dbReference>
<dbReference type="GeneID" id="4980623"/>
<dbReference type="KEGG" id="ang:An03g06360"/>
<dbReference type="VEuPathDB" id="FungiDB:An03g06360"/>
<dbReference type="HOGENOM" id="CLU_004760_0_1_1"/>
<dbReference type="Proteomes" id="UP000006706">
    <property type="component" value="Chromosome 6R"/>
</dbReference>
<dbReference type="GO" id="GO:0030428">
    <property type="term" value="C:cell septum"/>
    <property type="evidence" value="ECO:0007669"/>
    <property type="project" value="TreeGrafter"/>
</dbReference>
<dbReference type="GO" id="GO:0005886">
    <property type="term" value="C:plasma membrane"/>
    <property type="evidence" value="ECO:0007669"/>
    <property type="project" value="UniProtKB-SubCell"/>
</dbReference>
<dbReference type="GO" id="GO:0004100">
    <property type="term" value="F:chitin synthase activity"/>
    <property type="evidence" value="ECO:0007669"/>
    <property type="project" value="UniProtKB-EC"/>
</dbReference>
<dbReference type="GO" id="GO:0071555">
    <property type="term" value="P:cell wall organization"/>
    <property type="evidence" value="ECO:0007669"/>
    <property type="project" value="UniProtKB-KW"/>
</dbReference>
<dbReference type="GO" id="GO:0006031">
    <property type="term" value="P:chitin biosynthetic process"/>
    <property type="evidence" value="ECO:0007669"/>
    <property type="project" value="InterPro"/>
</dbReference>
<dbReference type="CDD" id="cd04190">
    <property type="entry name" value="Chitin_synth_C"/>
    <property type="match status" value="1"/>
</dbReference>
<dbReference type="InterPro" id="IPR004835">
    <property type="entry name" value="Chitin_synth"/>
</dbReference>
<dbReference type="InterPro" id="IPR004834">
    <property type="entry name" value="Chitin_synth_fun"/>
</dbReference>
<dbReference type="InterPro" id="IPR013616">
    <property type="entry name" value="Chitin_synth_N"/>
</dbReference>
<dbReference type="InterPro" id="IPR001173">
    <property type="entry name" value="Glyco_trans_2-like"/>
</dbReference>
<dbReference type="InterPro" id="IPR029044">
    <property type="entry name" value="Nucleotide-diphossugar_trans"/>
</dbReference>
<dbReference type="PANTHER" id="PTHR22914">
    <property type="entry name" value="CHITIN SYNTHASE"/>
    <property type="match status" value="1"/>
</dbReference>
<dbReference type="PANTHER" id="PTHR22914:SF39">
    <property type="entry name" value="CHITIN SYNTHASE"/>
    <property type="match status" value="1"/>
</dbReference>
<dbReference type="Pfam" id="PF01644">
    <property type="entry name" value="Chitin_synth_1"/>
    <property type="match status" value="1"/>
</dbReference>
<dbReference type="Pfam" id="PF08407">
    <property type="entry name" value="Chitin_synth_1N"/>
    <property type="match status" value="1"/>
</dbReference>
<dbReference type="Pfam" id="PF13632">
    <property type="entry name" value="Glyco_trans_2_3"/>
    <property type="match status" value="1"/>
</dbReference>
<dbReference type="SUPFAM" id="SSF53448">
    <property type="entry name" value="Nucleotide-diphospho-sugar transferases"/>
    <property type="match status" value="1"/>
</dbReference>
<accession>A2QHC2</accession>
<feature type="chain" id="PRO_0000460980" description="Chitin synthase F">
    <location>
        <begin position="1"/>
        <end position="873"/>
    </location>
</feature>
<feature type="transmembrane region" description="Helical" evidence="1">
    <location>
        <begin position="532"/>
        <end position="554"/>
    </location>
</feature>
<feature type="transmembrane region" description="Helical" evidence="1">
    <location>
        <begin position="588"/>
        <end position="608"/>
    </location>
</feature>
<feature type="transmembrane region" description="Helical" evidence="1">
    <location>
        <begin position="621"/>
        <end position="641"/>
    </location>
</feature>
<feature type="transmembrane region" description="Helical" evidence="1">
    <location>
        <begin position="672"/>
        <end position="692"/>
    </location>
</feature>
<feature type="transmembrane region" description="Helical" evidence="1">
    <location>
        <begin position="702"/>
        <end position="722"/>
    </location>
</feature>
<feature type="transmembrane region" description="Helical" evidence="1">
    <location>
        <begin position="802"/>
        <end position="822"/>
    </location>
</feature>
<feature type="transmembrane region" description="Helical" evidence="1">
    <location>
        <begin position="841"/>
        <end position="861"/>
    </location>
</feature>
<feature type="region of interest" description="Disordered" evidence="3">
    <location>
        <begin position="1"/>
        <end position="105"/>
    </location>
</feature>
<feature type="compositionally biased region" description="Polar residues" evidence="3">
    <location>
        <begin position="33"/>
        <end position="46"/>
    </location>
</feature>
<feature type="compositionally biased region" description="Polar residues" evidence="3">
    <location>
        <begin position="58"/>
        <end position="72"/>
    </location>
</feature>
<feature type="compositionally biased region" description="Polar residues" evidence="3">
    <location>
        <begin position="80"/>
        <end position="98"/>
    </location>
</feature>
<feature type="glycosylation site" description="N-linked (GlcNAc...) asparagine" evidence="2">
    <location>
        <position position="506"/>
    </location>
</feature>
<sequence>MEDAHDQSSRPLSFELESNHHSLRQLTPPICTSYPSNENEDVSQSLLPAPLNDRYPPISSQWPPGTIQQNPSEDPHQQTESEVASQTSWQRRQTTKSGSGLRRYPTRRINLVQGSVLSVDYPVPSAIRNSVEAKYRDSNDATAEEFTHLRYTAATCDPDDFTLRNGYNLRAAMFNRHTEILIAITYYNEDKVLTARTLHGVMQNIRDIVNLKKTQFWDKGGPAWQKIVVCLIFDGIGPCDKNTLDVLATVGIYQDGIMKHDVDGKETVAHIFEYTTQLSITPSQQLIRPQVDNPDNLPPVQMIFCLKQKNSKKINSHRWLFNAFGRVLNPEVCILIDAGTKPGHKSLLALWEAFYNNKHLGGACGEIHALLGPRWEKLVNPLVAAQNFEYKISNILDKPLESAFGYVSVLPGAFSAYRYRAIMGRPLEQYFHGDHTLSKKLGKKGIEGMNIFKKNMFLAEDRILCFELVAKAGYKWTLSYVKASKGETDVPEAPPEFLSQRRRWLNGSFAASLYSVMHFNRIYKSGHNLLRLVFLHVQLVYNICQLTMTWFSLASYWLTTSVIMDIVGTPSATIKNKGWPFGNDASPIVNNIIKALYLAFLMQQFFLALGNRPKGSQTSYILTFLYFAIVQLYILILSFYLVAQAFSGGNIDLDFDNGAGGFVGSFFTSTTGLVLIALVSTYGTYIIASILYCDPWHLLTSSWAYFLGMPLTINVLNVYAFCNWHDVSWGTKGSDDTASLPSAKTMKSVTQKSFVEEVDKPQVDIDIDFECTVRRALSPWQEPKEKKEVQLEDSYKTFRTNLVLLWTLCNGLLALLINNDSVRNLCLTTTSTDRTAWYFKVILWATSGLSVFRFLGALWFLGKTGLLCCFSRR</sequence>
<comment type="function">
    <text evidence="4 7">Polymerizes chitin, a structural polymer of the cell wall and septum, by transferring the sugar moiety of UDP-GlcNAc to the non-reducing end of the growing chitin polymer (Probable). Plays an important role in septal growth or maintenance (PubMed:38468360). Mediates colony spore formation (PubMed:38468360).</text>
</comment>
<comment type="catalytic activity">
    <reaction evidence="7">
        <text>[(1-&gt;4)-N-acetyl-beta-D-glucosaminyl](n) + UDP-N-acetyl-alpha-D-glucosamine = [(1-&gt;4)-N-acetyl-beta-D-glucosaminyl](n+1) + UDP + H(+)</text>
        <dbReference type="Rhea" id="RHEA:16637"/>
        <dbReference type="Rhea" id="RHEA-COMP:9593"/>
        <dbReference type="Rhea" id="RHEA-COMP:9595"/>
        <dbReference type="ChEBI" id="CHEBI:15378"/>
        <dbReference type="ChEBI" id="CHEBI:17029"/>
        <dbReference type="ChEBI" id="CHEBI:57705"/>
        <dbReference type="ChEBI" id="CHEBI:58223"/>
        <dbReference type="EC" id="2.4.1.16"/>
    </reaction>
    <physiologicalReaction direction="left-to-right" evidence="7">
        <dbReference type="Rhea" id="RHEA:16638"/>
    </physiologicalReaction>
</comment>
<comment type="subcellular location">
    <subcellularLocation>
        <location evidence="7">Cell membrane</location>
        <topology evidence="1">Multi-pass membrane protein</topology>
    </subcellularLocation>
</comment>
<comment type="disruption phenotype">
    <text evidence="4">Reduces drastically spore production and leads to strong retarded radial growth rates (PubMed:38468360). Increases total protein in culture supernatant over threefold (PubMed:38468360). Increases sensitivity to AFP, a small, basic and cysteine-rich peptide that exerts extremely potent antifungal activity by inhibitiing cell wall chitin biosynthesis (PubMed:38468360).</text>
</comment>
<comment type="similarity">
    <text evidence="6">Belongs to the chitin synthase family. Class III subfamily.</text>
</comment>
<proteinExistence type="inferred from homology"/>
<keyword id="KW-1003">Cell membrane</keyword>
<keyword id="KW-0961">Cell wall biogenesis/degradation</keyword>
<keyword id="KW-0325">Glycoprotein</keyword>
<keyword id="KW-0328">Glycosyltransferase</keyword>
<keyword id="KW-0472">Membrane</keyword>
<keyword id="KW-1185">Reference proteome</keyword>
<keyword id="KW-0808">Transferase</keyword>
<keyword id="KW-0812">Transmembrane</keyword>
<keyword id="KW-1133">Transmembrane helix</keyword>
<gene>
    <name evidence="5" type="primary">chsF</name>
    <name type="ORF">An03g06360</name>
</gene>
<protein>
    <recommendedName>
        <fullName evidence="5">Chitin synthase F</fullName>
        <ecNumber evidence="7">2.4.1.16</ecNumber>
    </recommendedName>
    <alternativeName>
        <fullName evidence="6">Chitin-UDP acetyl-glucosaminyl transferase F</fullName>
    </alternativeName>
    <alternativeName>
        <fullName evidence="5">Class-III chitin synthase F</fullName>
    </alternativeName>
</protein>